<gene>
    <name type="primary">isdG</name>
    <name type="ordered locus">SAOUHSC_01089</name>
</gene>
<sequence length="107" mass="12546">MKFMAENRLTLTKGTAKDIIERFYTRHGIETLEGFDGMFVTQTLEQEDFDEVKILTVWKSKQAFTDWLKSDVFKAAHKHVRSKNEDESSPIINNKVITYDIGYSYMK</sequence>
<accession>Q2FZE2</accession>
<proteinExistence type="evidence at protein level"/>
<name>HDOX1_STAA8</name>
<comment type="function">
    <text evidence="1 2">Allows bacterial pathogens to use the host heme as an iron source. Catalyzes the oxidative degradation of the heme macrocyclic porphyrin ring to the oxo-bilirubin chromophore staphylobilin (a mixture of the linear tetrapyrroles 5-oxo-delta-bilirubin and 15-oxo-beta-bilirubin) in the presence of a suitable electron donor such as ascorbate or NADPH--cytochrome P450 reductase, with subsequent release of free iron.</text>
</comment>
<comment type="catalytic activity">
    <reaction evidence="1 2">
        <text>heme b + 5 AH2 + 4 O2 + 2 H(+) = delta-staphylobilin + Fe(2+) + formaldehyde + 5 A + 4 H2O</text>
        <dbReference type="Rhea" id="RHEA:37039"/>
        <dbReference type="ChEBI" id="CHEBI:13193"/>
        <dbReference type="ChEBI" id="CHEBI:15377"/>
        <dbReference type="ChEBI" id="CHEBI:15378"/>
        <dbReference type="ChEBI" id="CHEBI:15379"/>
        <dbReference type="ChEBI" id="CHEBI:16842"/>
        <dbReference type="ChEBI" id="CHEBI:17499"/>
        <dbReference type="ChEBI" id="CHEBI:29033"/>
        <dbReference type="ChEBI" id="CHEBI:60344"/>
        <dbReference type="ChEBI" id="CHEBI:74361"/>
        <dbReference type="EC" id="1.14.99.48"/>
    </reaction>
</comment>
<comment type="catalytic activity">
    <reaction evidence="1 2">
        <text>heme b + 5 AH2 + 4 O2 + 2 H(+) = beta-staphylobilin + Fe(2+) + formaldehyde + 5 A + 4 H2O</text>
        <dbReference type="Rhea" id="RHEA:37363"/>
        <dbReference type="ChEBI" id="CHEBI:13193"/>
        <dbReference type="ChEBI" id="CHEBI:15377"/>
        <dbReference type="ChEBI" id="CHEBI:15378"/>
        <dbReference type="ChEBI" id="CHEBI:15379"/>
        <dbReference type="ChEBI" id="CHEBI:16842"/>
        <dbReference type="ChEBI" id="CHEBI:17499"/>
        <dbReference type="ChEBI" id="CHEBI:29033"/>
        <dbReference type="ChEBI" id="CHEBI:60344"/>
        <dbReference type="ChEBI" id="CHEBI:74362"/>
        <dbReference type="EC" id="1.14.99.48"/>
    </reaction>
</comment>
<comment type="subunit">
    <text evidence="1">Homodimer.</text>
</comment>
<comment type="subcellular location">
    <subcellularLocation>
        <location evidence="1 2">Cytoplasm</location>
    </subcellularLocation>
</comment>
<comment type="induction">
    <text evidence="2">Transcriptionally regulated by iron and the ferric uptake repressor (fur) protein.</text>
</comment>
<comment type="similarity">
    <text evidence="1">Belongs to the antibiotic biosynthesis monooxygenase family. Heme-degrading monooxygenase IsdG subfamily.</text>
</comment>
<feature type="chain" id="PRO_0000270093" description="Heme oxygenase (staphylobilin-producing) 1">
    <location>
        <begin position="1"/>
        <end position="107"/>
    </location>
</feature>
<feature type="domain" description="ABM" evidence="1">
    <location>
        <begin position="3"/>
        <end position="92"/>
    </location>
</feature>
<feature type="binding site" evidence="1">
    <location>
        <position position="7"/>
    </location>
    <ligand>
        <name>Fe cation</name>
        <dbReference type="ChEBI" id="CHEBI:24875"/>
    </ligand>
</feature>
<feature type="binding site" evidence="1">
    <location>
        <begin position="22"/>
        <end position="29"/>
    </location>
    <ligand>
        <name>heme</name>
        <dbReference type="ChEBI" id="CHEBI:30413"/>
    </ligand>
</feature>
<feature type="binding site" description="axial binding residue" evidence="1">
    <location>
        <position position="77"/>
    </location>
    <ligand>
        <name>heme</name>
        <dbReference type="ChEBI" id="CHEBI:30413"/>
    </ligand>
    <ligandPart>
        <name>Fe</name>
        <dbReference type="ChEBI" id="CHEBI:18248"/>
    </ligandPart>
</feature>
<feature type="site" description="Transition state stabilizer" evidence="1">
    <location>
        <position position="67"/>
    </location>
</feature>
<evidence type="ECO:0000255" key="1">
    <source>
        <dbReference type="HAMAP-Rule" id="MF_01272"/>
    </source>
</evidence>
<evidence type="ECO:0000269" key="2">
    <source>
    </source>
</evidence>
<protein>
    <recommendedName>
        <fullName evidence="1">Heme oxygenase (staphylobilin-producing) 1</fullName>
        <ecNumber evidence="1 2">1.14.99.48</ecNumber>
    </recommendedName>
    <alternativeName>
        <fullName evidence="1">Heme-degrading monooxygenase 1</fullName>
    </alternativeName>
    <alternativeName>
        <fullName evidence="1">Iron-regulated surface determinant 1</fullName>
    </alternativeName>
    <alternativeName>
        <fullName evidence="1">Iron-responsive surface determinant 1</fullName>
    </alternativeName>
</protein>
<organism>
    <name type="scientific">Staphylococcus aureus (strain NCTC 8325 / PS 47)</name>
    <dbReference type="NCBI Taxonomy" id="93061"/>
    <lineage>
        <taxon>Bacteria</taxon>
        <taxon>Bacillati</taxon>
        <taxon>Bacillota</taxon>
        <taxon>Bacilli</taxon>
        <taxon>Bacillales</taxon>
        <taxon>Staphylococcaceae</taxon>
        <taxon>Staphylococcus</taxon>
    </lineage>
</organism>
<keyword id="KW-0963">Cytoplasm</keyword>
<keyword id="KW-0349">Heme</keyword>
<keyword id="KW-0408">Iron</keyword>
<keyword id="KW-0479">Metal-binding</keyword>
<keyword id="KW-0503">Monooxygenase</keyword>
<keyword id="KW-0560">Oxidoreductase</keyword>
<keyword id="KW-1185">Reference proteome</keyword>
<dbReference type="EC" id="1.14.99.48" evidence="1 2"/>
<dbReference type="EMBL" id="CP000253">
    <property type="protein sequence ID" value="ABD30204.1"/>
    <property type="molecule type" value="Genomic_DNA"/>
</dbReference>
<dbReference type="RefSeq" id="WP_000670950.1">
    <property type="nucleotide sequence ID" value="NZ_LS483365.1"/>
</dbReference>
<dbReference type="RefSeq" id="YP_499634.1">
    <property type="nucleotide sequence ID" value="NC_007795.1"/>
</dbReference>
<dbReference type="SMR" id="Q2FZE2"/>
<dbReference type="STRING" id="93061.SAOUHSC_01089"/>
<dbReference type="PaxDb" id="1280-SAXN108_1131"/>
<dbReference type="GeneID" id="3919250"/>
<dbReference type="KEGG" id="sao:SAOUHSC_01089"/>
<dbReference type="PATRIC" id="fig|93061.5.peg.998"/>
<dbReference type="eggNOG" id="COG2329">
    <property type="taxonomic scope" value="Bacteria"/>
</dbReference>
<dbReference type="HOGENOM" id="CLU_141544_2_1_9"/>
<dbReference type="OrthoDB" id="384737at2"/>
<dbReference type="PRO" id="PR:Q2FZE2"/>
<dbReference type="Proteomes" id="UP000008816">
    <property type="component" value="Chromosome"/>
</dbReference>
<dbReference type="GO" id="GO:0005737">
    <property type="term" value="C:cytoplasm"/>
    <property type="evidence" value="ECO:0007669"/>
    <property type="project" value="UniProtKB-SubCell"/>
</dbReference>
<dbReference type="GO" id="GO:0020037">
    <property type="term" value="F:heme binding"/>
    <property type="evidence" value="ECO:0007669"/>
    <property type="project" value="UniProtKB-UniRule"/>
</dbReference>
<dbReference type="GO" id="GO:0004392">
    <property type="term" value="F:heme oxygenase (decyclizing) activity"/>
    <property type="evidence" value="ECO:0000318"/>
    <property type="project" value="GO_Central"/>
</dbReference>
<dbReference type="GO" id="GO:0005506">
    <property type="term" value="F:iron ion binding"/>
    <property type="evidence" value="ECO:0007669"/>
    <property type="project" value="UniProtKB-UniRule"/>
</dbReference>
<dbReference type="GO" id="GO:0042167">
    <property type="term" value="P:heme catabolic process"/>
    <property type="evidence" value="ECO:0000318"/>
    <property type="project" value="GO_Central"/>
</dbReference>
<dbReference type="GO" id="GO:0033212">
    <property type="term" value="P:iron import into cell"/>
    <property type="evidence" value="ECO:0007669"/>
    <property type="project" value="InterPro"/>
</dbReference>
<dbReference type="Gene3D" id="3.30.70.100">
    <property type="match status" value="1"/>
</dbReference>
<dbReference type="HAMAP" id="MF_01272">
    <property type="entry name" value="Heme_degrading_monooxygenase"/>
    <property type="match status" value="1"/>
</dbReference>
<dbReference type="InterPro" id="IPR007138">
    <property type="entry name" value="ABM_dom"/>
</dbReference>
<dbReference type="InterPro" id="IPR011008">
    <property type="entry name" value="Dimeric_a/b-barrel"/>
</dbReference>
<dbReference type="InterPro" id="IPR050404">
    <property type="entry name" value="Heme-degrading_MO"/>
</dbReference>
<dbReference type="InterPro" id="IPR023953">
    <property type="entry name" value="IsdG"/>
</dbReference>
<dbReference type="NCBIfam" id="NF009837">
    <property type="entry name" value="PRK13312.1"/>
    <property type="match status" value="1"/>
</dbReference>
<dbReference type="PANTHER" id="PTHR34474:SF4">
    <property type="entry name" value="HEME OXYGENASE (STAPHYLOBILIN-PRODUCING) 1"/>
    <property type="match status" value="1"/>
</dbReference>
<dbReference type="PANTHER" id="PTHR34474">
    <property type="entry name" value="SIGNAL TRANSDUCTION PROTEIN TRAP"/>
    <property type="match status" value="1"/>
</dbReference>
<dbReference type="Pfam" id="PF03992">
    <property type="entry name" value="ABM"/>
    <property type="match status" value="1"/>
</dbReference>
<dbReference type="SUPFAM" id="SSF54909">
    <property type="entry name" value="Dimeric alpha+beta barrel"/>
    <property type="match status" value="1"/>
</dbReference>
<dbReference type="PROSITE" id="PS51725">
    <property type="entry name" value="ABM"/>
    <property type="match status" value="1"/>
</dbReference>
<reference key="1">
    <citation type="book" date="2006" name="Gram positive pathogens, 2nd edition">
        <title>The Staphylococcus aureus NCTC 8325 genome.</title>
        <editorList>
            <person name="Fischetti V."/>
            <person name="Novick R."/>
            <person name="Ferretti J."/>
            <person name="Portnoy D."/>
            <person name="Rood J."/>
        </editorList>
        <authorList>
            <person name="Gillaspy A.F."/>
            <person name="Worrell V."/>
            <person name="Orvis J."/>
            <person name="Roe B.A."/>
            <person name="Dyer D.W."/>
            <person name="Iandolo J.J."/>
        </authorList>
    </citation>
    <scope>NUCLEOTIDE SEQUENCE [LARGE SCALE GENOMIC DNA]</scope>
    <source>
        <strain>NCTC 8325 / PS 47</strain>
    </source>
</reference>
<reference key="2">
    <citation type="journal article" date="2004" name="J. Biol. Chem.">
        <title>IsdG and IsdI, heme-degrading enzymes in the cytoplasm of Staphylococcus aureus.</title>
        <authorList>
            <person name="Skaar E.P."/>
            <person name="Gaspar A.H."/>
            <person name="Schneewind O."/>
        </authorList>
    </citation>
    <scope>FUNCTION</scope>
    <scope>CATALYTIC ACTIVITY</scope>
    <scope>INDUCTION</scope>
    <scope>SUBCELLULAR LOCATION</scope>
</reference>